<gene>
    <name evidence="1" type="primary">TRM2</name>
    <name type="ordered locus">25</name>
</gene>
<evidence type="ECO:0000255" key="1">
    <source>
        <dbReference type="HAMAP-Rule" id="MF_04015"/>
    </source>
</evidence>
<evidence type="ECO:0000256" key="2">
    <source>
        <dbReference type="SAM" id="MobiDB-lite"/>
    </source>
</evidence>
<feature type="chain" id="PRO_0000116025" description="Tripartite terminase subunit 2">
    <location>
        <begin position="1"/>
        <end position="156"/>
    </location>
</feature>
<feature type="region of interest" description="Disordered" evidence="2">
    <location>
        <begin position="1"/>
        <end position="37"/>
    </location>
</feature>
<feature type="compositionally biased region" description="Polar residues" evidence="2">
    <location>
        <begin position="19"/>
        <end position="37"/>
    </location>
</feature>
<sequence length="156" mass="17461">MYESENASEHHPELEDVFSENTGDSNPSMGSSDSTRSISGMRARDLITDTDVNLLNIDALESKYFPADSTFTLSVWFENLIPPEIEAILPTTDAQLNYISFTSRLASVLKHKESNDSEKSAYVVPCEHSASVTRRRERFAGVMAKFLDLHEILKDA</sequence>
<name>TRM2_VZVD</name>
<proteinExistence type="inferred from homology"/>
<dbReference type="EMBL" id="X04370">
    <property type="protein sequence ID" value="CAA27909.1"/>
    <property type="molecule type" value="Genomic_DNA"/>
</dbReference>
<dbReference type="PIR" id="G27343">
    <property type="entry name" value="WZBE25"/>
</dbReference>
<dbReference type="SMR" id="P09281"/>
<dbReference type="Proteomes" id="UP000002602">
    <property type="component" value="Genome"/>
</dbReference>
<dbReference type="GO" id="GO:0042025">
    <property type="term" value="C:host cell nucleus"/>
    <property type="evidence" value="ECO:0007669"/>
    <property type="project" value="UniProtKB-SubCell"/>
</dbReference>
<dbReference type="GO" id="GO:0019073">
    <property type="term" value="P:viral DNA genome packaging"/>
    <property type="evidence" value="ECO:0007669"/>
    <property type="project" value="InterPro"/>
</dbReference>
<dbReference type="HAMAP" id="MF_04015">
    <property type="entry name" value="HSV_TRM2"/>
    <property type="match status" value="1"/>
</dbReference>
<dbReference type="InterPro" id="IPR005208">
    <property type="entry name" value="Herpes_TT2"/>
</dbReference>
<dbReference type="Pfam" id="PF03581">
    <property type="entry name" value="Herpes_UL33"/>
    <property type="match status" value="1"/>
</dbReference>
<accession>P09281</accession>
<protein>
    <recommendedName>
        <fullName evidence="1">Tripartite terminase subunit 2</fullName>
    </recommendedName>
</protein>
<comment type="function">
    <text evidence="1">Component of the molecular motor that translocates viral genomic DNA in empty capsid during DNA packaging. Forms a tripartite terminase complex together with TRM1 and TRM3 in the host cytoplasm. Once the complex reaches the host nucleus, it interacts with the capsid portal vertex. This portal forms a ring in which genomic DNA is translocated into the capsid.</text>
</comment>
<comment type="subunit">
    <text evidence="1">Associates with TRM1 and TRM3 to form the tripartite terminase complex.</text>
</comment>
<comment type="subcellular location">
    <subcellularLocation>
        <location evidence="1">Host nucleus</location>
    </subcellularLocation>
    <text evidence="1">Found associated with the external surface of the viral capsid during assembly and DNA packaging, but seems absent in extracellular mature virions.</text>
</comment>
<comment type="similarity">
    <text evidence="1">Belongs to the herpesviridae TRM2 protein family.</text>
</comment>
<reference key="1">
    <citation type="journal article" date="1986" name="J. Gen. Virol.">
        <title>The complete DNA sequence of varicella-zoster virus.</title>
        <authorList>
            <person name="Davison A.J."/>
            <person name="Scott J.E."/>
        </authorList>
    </citation>
    <scope>NUCLEOTIDE SEQUENCE [LARGE SCALE GENOMIC DNA]</scope>
</reference>
<keyword id="KW-1048">Host nucleus</keyword>
<keyword id="KW-1185">Reference proteome</keyword>
<keyword id="KW-0231">Viral genome packaging</keyword>
<keyword id="KW-1188">Viral release from host cell</keyword>
<organism>
    <name type="scientific">Varicella-zoster virus (strain Dumas)</name>
    <name type="common">HHV-3</name>
    <name type="synonym">Human herpesvirus 3</name>
    <dbReference type="NCBI Taxonomy" id="10338"/>
    <lineage>
        <taxon>Viruses</taxon>
        <taxon>Duplodnaviria</taxon>
        <taxon>Heunggongvirae</taxon>
        <taxon>Peploviricota</taxon>
        <taxon>Herviviricetes</taxon>
        <taxon>Herpesvirales</taxon>
        <taxon>Orthoherpesviridae</taxon>
        <taxon>Alphaherpesvirinae</taxon>
        <taxon>Varicellovirus</taxon>
        <taxon>Varicellovirus humanalpha3</taxon>
        <taxon>Human herpesvirus 3</taxon>
    </lineage>
</organism>
<organismHost>
    <name type="scientific">Homo sapiens</name>
    <name type="common">Human</name>
    <dbReference type="NCBI Taxonomy" id="9606"/>
</organismHost>